<feature type="chain" id="PRO_0000084141" description="Poly-beta-1,6-N-acetyl-D-glucosamine synthesis protein IcaD">
    <location>
        <begin position="1"/>
        <end position="101"/>
    </location>
</feature>
<feature type="transmembrane region" description="Helical" evidence="2">
    <location>
        <begin position="21"/>
        <end position="43"/>
    </location>
</feature>
<feature type="transmembrane region" description="Helical" evidence="2">
    <location>
        <begin position="71"/>
        <end position="93"/>
    </location>
</feature>
<dbReference type="EMBL" id="AY382582">
    <property type="protein sequence ID" value="AAQ88121.1"/>
    <property type="molecule type" value="Genomic_DNA"/>
</dbReference>
<dbReference type="EMBL" id="AY138959">
    <property type="protein sequence ID" value="AAN17772.1"/>
    <property type="molecule type" value="Genomic_DNA"/>
</dbReference>
<dbReference type="RefSeq" id="WP_002477257.1">
    <property type="nucleotide sequence ID" value="NZ_WLUZ01000001.1"/>
</dbReference>
<dbReference type="SMR" id="P69519"/>
<dbReference type="OrthoDB" id="2411567at2"/>
<dbReference type="GO" id="GO:0005886">
    <property type="term" value="C:plasma membrane"/>
    <property type="evidence" value="ECO:0007669"/>
    <property type="project" value="UniProtKB-SubCell"/>
</dbReference>
<dbReference type="InterPro" id="IPR020510">
    <property type="entry name" value="IcaD"/>
</dbReference>
<dbReference type="NCBIfam" id="TIGR03932">
    <property type="entry name" value="PIA_icaD"/>
    <property type="match status" value="1"/>
</dbReference>
<comment type="function">
    <text evidence="1">Necessary for the synthesis of poly-beta-1,6-N-acetyl-D-glucosamine (PNAG, also referred to as PIA), a biofilm adhesin polysaccharide. Is required for full IcaA N-acetylglucosaminyltransferase activity (By similarity).</text>
</comment>
<comment type="subcellular location">
    <subcellularLocation>
        <location evidence="1">Cell membrane</location>
        <topology evidence="1">Multi-pass membrane protein</topology>
    </subcellularLocation>
</comment>
<comment type="similarity">
    <text evidence="3">Belongs to the IcaD family.</text>
</comment>
<sequence length="101" mass="11951">MVKPRQRQYPTVTSYLNIVRESLFITISGVFWMYCIVVMIVYIGTLINSQMESVITIRIALNVENTEIYKLFGWMSLFVLIIFIFFTFSLAFQKYKKGRDI</sequence>
<proteinExistence type="inferred from homology"/>
<protein>
    <recommendedName>
        <fullName>Poly-beta-1,6-N-acetyl-D-glucosamine synthesis protein IcaD</fullName>
        <shortName>PGA synthesis protein IcaD</shortName>
        <shortName>Poly-beta-1,6-GlcNAc synthesis protein IcaD</shortName>
    </recommendedName>
    <alternativeName>
        <fullName>Biofilm polysaccharide intercellular adhesin synthesis protein IcaD</fullName>
        <shortName>Biofilm PIA synthesis protein IcaD</shortName>
    </alternativeName>
    <alternativeName>
        <fullName>Intercellular adhesion protein D</fullName>
    </alternativeName>
</protein>
<name>ICAD_STAEP</name>
<accession>P69519</accession>
<accession>O54214</accession>
<keyword id="KW-1003">Cell membrane</keyword>
<keyword id="KW-0472">Membrane</keyword>
<keyword id="KW-0812">Transmembrane</keyword>
<keyword id="KW-1133">Transmembrane helix</keyword>
<evidence type="ECO:0000250" key="1"/>
<evidence type="ECO:0000255" key="2"/>
<evidence type="ECO:0000305" key="3"/>
<reference key="1">
    <citation type="submission" date="2003-09" db="EMBL/GenBank/DDBJ databases">
        <authorList>
            <person name="Li H."/>
            <person name="Wen Y."/>
        </authorList>
    </citation>
    <scope>NUCLEOTIDE SEQUENCE [GENOMIC DNA]</scope>
    <source>
        <strain>97-337</strain>
    </source>
</reference>
<reference key="2">
    <citation type="journal article" date="2004" name="J. Med. Microbiol.">
        <title>Genetic and phenotypic analysis of biofilm phenotypic variation in multiple Staphylococcus epidermidis isolates.</title>
        <authorList>
            <person name="Handke L.D."/>
            <person name="Conlon K.M."/>
            <person name="Slater S.R."/>
            <person name="Elbaruni S."/>
            <person name="Fitzpatrick F."/>
            <person name="Humphreys H."/>
            <person name="Giles W.P."/>
            <person name="Rupp M.E."/>
            <person name="Fey P.D."/>
            <person name="O'Gara J.P."/>
        </authorList>
    </citation>
    <scope>NUCLEOTIDE SEQUENCE [GENOMIC DNA]</scope>
    <source>
        <strain>SE5</strain>
    </source>
</reference>
<gene>
    <name type="primary">icaD</name>
</gene>
<organism>
    <name type="scientific">Staphylococcus epidermidis</name>
    <dbReference type="NCBI Taxonomy" id="1282"/>
    <lineage>
        <taxon>Bacteria</taxon>
        <taxon>Bacillati</taxon>
        <taxon>Bacillota</taxon>
        <taxon>Bacilli</taxon>
        <taxon>Bacillales</taxon>
        <taxon>Staphylococcaceae</taxon>
        <taxon>Staphylococcus</taxon>
    </lineage>
</organism>